<organism>
    <name type="scientific">Shewanella oneidensis (strain ATCC 700550 / JCM 31522 / CIP 106686 / LMG 19005 / NCIMB 14063 / MR-1)</name>
    <dbReference type="NCBI Taxonomy" id="211586"/>
    <lineage>
        <taxon>Bacteria</taxon>
        <taxon>Pseudomonadati</taxon>
        <taxon>Pseudomonadota</taxon>
        <taxon>Gammaproteobacteria</taxon>
        <taxon>Alteromonadales</taxon>
        <taxon>Shewanellaceae</taxon>
        <taxon>Shewanella</taxon>
    </lineage>
</organism>
<sequence length="146" mass="16736">MAFWQSKTLTEMTSQEWESLCDGCGKCCLNKLIDDETEELYYTNAACLLLDHQTTSCQHYSDRFRYVPQCTVITAQNVHELTWLPDSCAYRRLAAGRALPSWHPLLTGSKDAMHLAGMSIQGKVVDERRVKDIEDHIVLWPLKDLD</sequence>
<reference key="1">
    <citation type="journal article" date="2002" name="Nat. Biotechnol.">
        <title>Genome sequence of the dissimilatory metal ion-reducing bacterium Shewanella oneidensis.</title>
        <authorList>
            <person name="Heidelberg J.F."/>
            <person name="Paulsen I.T."/>
            <person name="Nelson K.E."/>
            <person name="Gaidos E.J."/>
            <person name="Nelson W.C."/>
            <person name="Read T.D."/>
            <person name="Eisen J.A."/>
            <person name="Seshadri R."/>
            <person name="Ward N.L."/>
            <person name="Methe B.A."/>
            <person name="Clayton R.A."/>
            <person name="Meyer T."/>
            <person name="Tsapin A."/>
            <person name="Scott J."/>
            <person name="Beanan M.J."/>
            <person name="Brinkac L.M."/>
            <person name="Daugherty S.C."/>
            <person name="DeBoy R.T."/>
            <person name="Dodson R.J."/>
            <person name="Durkin A.S."/>
            <person name="Haft D.H."/>
            <person name="Kolonay J.F."/>
            <person name="Madupu R."/>
            <person name="Peterson J.D."/>
            <person name="Umayam L.A."/>
            <person name="White O."/>
            <person name="Wolf A.M."/>
            <person name="Vamathevan J.J."/>
            <person name="Weidman J.F."/>
            <person name="Impraim M."/>
            <person name="Lee K."/>
            <person name="Berry K.J."/>
            <person name="Lee C."/>
            <person name="Mueller J."/>
            <person name="Khouri H.M."/>
            <person name="Gill J."/>
            <person name="Utterback T.R."/>
            <person name="McDonald L.A."/>
            <person name="Feldblyum T.V."/>
            <person name="Smith H.O."/>
            <person name="Venter J.C."/>
            <person name="Nealson K.H."/>
            <person name="Fraser C.M."/>
        </authorList>
    </citation>
    <scope>NUCLEOTIDE SEQUENCE [LARGE SCALE GENOMIC DNA]</scope>
    <source>
        <strain>ATCC 700550 / JCM 31522 / CIP 106686 / LMG 19005 / NCIMB 14063 / MR-1</strain>
    </source>
</reference>
<name>Y2573_SHEON</name>
<evidence type="ECO:0000255" key="1">
    <source>
        <dbReference type="HAMAP-Rule" id="MF_00676"/>
    </source>
</evidence>
<proteinExistence type="inferred from homology"/>
<gene>
    <name type="ordered locus">SO_2573</name>
</gene>
<feature type="chain" id="PRO_0000214593" description="UPF0260 protein SO_2573">
    <location>
        <begin position="1"/>
        <end position="146"/>
    </location>
</feature>
<dbReference type="EMBL" id="AE014299">
    <property type="protein sequence ID" value="AAN55603.1"/>
    <property type="molecule type" value="Genomic_DNA"/>
</dbReference>
<dbReference type="RefSeq" id="NP_718159.1">
    <property type="nucleotide sequence ID" value="NC_004347.2"/>
</dbReference>
<dbReference type="RefSeq" id="WP_011072525.1">
    <property type="nucleotide sequence ID" value="NC_004347.2"/>
</dbReference>
<dbReference type="STRING" id="211586.SO_2573"/>
<dbReference type="PaxDb" id="211586-SO_2573"/>
<dbReference type="DNASU" id="1170277"/>
<dbReference type="KEGG" id="son:SO_2573"/>
<dbReference type="PATRIC" id="fig|211586.12.peg.2476"/>
<dbReference type="eggNOG" id="COG2983">
    <property type="taxonomic scope" value="Bacteria"/>
</dbReference>
<dbReference type="HOGENOM" id="CLU_109769_0_1_6"/>
<dbReference type="OrthoDB" id="9786855at2"/>
<dbReference type="PhylomeDB" id="Q8EE17"/>
<dbReference type="BioCyc" id="SONE211586:G1GMP-2359-MONOMER"/>
<dbReference type="Proteomes" id="UP000008186">
    <property type="component" value="Chromosome"/>
</dbReference>
<dbReference type="HAMAP" id="MF_00676">
    <property type="entry name" value="UPF0260"/>
    <property type="match status" value="1"/>
</dbReference>
<dbReference type="InterPro" id="IPR005358">
    <property type="entry name" value="Puta_zinc/iron-chelating_dom"/>
</dbReference>
<dbReference type="InterPro" id="IPR008228">
    <property type="entry name" value="UCP006173"/>
</dbReference>
<dbReference type="NCBIfam" id="NF003500">
    <property type="entry name" value="PRK05170.1-4"/>
    <property type="match status" value="1"/>
</dbReference>
<dbReference type="NCBIfam" id="NF003501">
    <property type="entry name" value="PRK05170.1-5"/>
    <property type="match status" value="1"/>
</dbReference>
<dbReference type="NCBIfam" id="NF003507">
    <property type="entry name" value="PRK05170.2-5"/>
    <property type="match status" value="1"/>
</dbReference>
<dbReference type="PANTHER" id="PTHR37421">
    <property type="entry name" value="UPF0260 PROTEIN YCGN"/>
    <property type="match status" value="1"/>
</dbReference>
<dbReference type="PANTHER" id="PTHR37421:SF1">
    <property type="entry name" value="UPF0260 PROTEIN YCGN"/>
    <property type="match status" value="1"/>
</dbReference>
<dbReference type="Pfam" id="PF03692">
    <property type="entry name" value="CxxCxxCC"/>
    <property type="match status" value="1"/>
</dbReference>
<dbReference type="PIRSF" id="PIRSF006173">
    <property type="entry name" value="UCP006173"/>
    <property type="match status" value="1"/>
</dbReference>
<protein>
    <recommendedName>
        <fullName evidence="1">UPF0260 protein SO_2573</fullName>
    </recommendedName>
</protein>
<keyword id="KW-1185">Reference proteome</keyword>
<comment type="similarity">
    <text evidence="1">Belongs to the UPF0260 family.</text>
</comment>
<accession>Q8EE17</accession>